<reference key="1">
    <citation type="journal article" date="2008" name="J. Bacteriol.">
        <title>The complete genome sequence of Actinobacillus pleuropneumoniae L20 (serotype 5b).</title>
        <authorList>
            <person name="Foote S.J."/>
            <person name="Bosse J.T."/>
            <person name="Bouevitch A.B."/>
            <person name="Langford P.R."/>
            <person name="Young N.M."/>
            <person name="Nash J.H.E."/>
        </authorList>
    </citation>
    <scope>NUCLEOTIDE SEQUENCE [LARGE SCALE GENOMIC DNA]</scope>
    <source>
        <strain>L20</strain>
    </source>
</reference>
<accession>A3N378</accession>
<gene>
    <name evidence="1" type="primary">rpmJ1</name>
    <name type="ordered locus">APL_1780</name>
</gene>
<dbReference type="EMBL" id="CP000569">
    <property type="protein sequence ID" value="ABN74864.1"/>
    <property type="molecule type" value="Genomic_DNA"/>
</dbReference>
<dbReference type="RefSeq" id="WP_011848654.1">
    <property type="nucleotide sequence ID" value="NC_009053.1"/>
</dbReference>
<dbReference type="SMR" id="A3N378"/>
<dbReference type="STRING" id="416269.APL_1780"/>
<dbReference type="EnsemblBacteria" id="ABN74864">
    <property type="protein sequence ID" value="ABN74864"/>
    <property type="gene ID" value="APL_1780"/>
</dbReference>
<dbReference type="KEGG" id="apl:APL_1780"/>
<dbReference type="PATRIC" id="fig|416269.6.peg.1851"/>
<dbReference type="eggNOG" id="COG0257">
    <property type="taxonomic scope" value="Bacteria"/>
</dbReference>
<dbReference type="HOGENOM" id="CLU_135723_6_2_6"/>
<dbReference type="Proteomes" id="UP000001432">
    <property type="component" value="Chromosome"/>
</dbReference>
<dbReference type="GO" id="GO:0005737">
    <property type="term" value="C:cytoplasm"/>
    <property type="evidence" value="ECO:0007669"/>
    <property type="project" value="UniProtKB-ARBA"/>
</dbReference>
<dbReference type="GO" id="GO:1990904">
    <property type="term" value="C:ribonucleoprotein complex"/>
    <property type="evidence" value="ECO:0007669"/>
    <property type="project" value="UniProtKB-KW"/>
</dbReference>
<dbReference type="GO" id="GO:0005840">
    <property type="term" value="C:ribosome"/>
    <property type="evidence" value="ECO:0007669"/>
    <property type="project" value="UniProtKB-KW"/>
</dbReference>
<dbReference type="GO" id="GO:0003735">
    <property type="term" value="F:structural constituent of ribosome"/>
    <property type="evidence" value="ECO:0007669"/>
    <property type="project" value="InterPro"/>
</dbReference>
<dbReference type="GO" id="GO:0006412">
    <property type="term" value="P:translation"/>
    <property type="evidence" value="ECO:0007669"/>
    <property type="project" value="UniProtKB-UniRule"/>
</dbReference>
<dbReference type="HAMAP" id="MF_00251">
    <property type="entry name" value="Ribosomal_bL36"/>
    <property type="match status" value="1"/>
</dbReference>
<dbReference type="InterPro" id="IPR000473">
    <property type="entry name" value="Ribosomal_bL36"/>
</dbReference>
<dbReference type="InterPro" id="IPR035977">
    <property type="entry name" value="Ribosomal_bL36_sp"/>
</dbReference>
<dbReference type="NCBIfam" id="TIGR01022">
    <property type="entry name" value="rpmJ_bact"/>
    <property type="match status" value="1"/>
</dbReference>
<dbReference type="PANTHER" id="PTHR42888">
    <property type="entry name" value="50S RIBOSOMAL PROTEIN L36, CHLOROPLASTIC"/>
    <property type="match status" value="1"/>
</dbReference>
<dbReference type="PANTHER" id="PTHR42888:SF1">
    <property type="entry name" value="LARGE RIBOSOMAL SUBUNIT PROTEIN BL36C"/>
    <property type="match status" value="1"/>
</dbReference>
<dbReference type="Pfam" id="PF00444">
    <property type="entry name" value="Ribosomal_L36"/>
    <property type="match status" value="1"/>
</dbReference>
<dbReference type="SUPFAM" id="SSF57840">
    <property type="entry name" value="Ribosomal protein L36"/>
    <property type="match status" value="1"/>
</dbReference>
<dbReference type="PROSITE" id="PS00828">
    <property type="entry name" value="RIBOSOMAL_L36"/>
    <property type="match status" value="1"/>
</dbReference>
<name>RL361_ACTP2</name>
<protein>
    <recommendedName>
        <fullName evidence="1">Large ribosomal subunit protein bL36A</fullName>
    </recommendedName>
    <alternativeName>
        <fullName evidence="2">50S ribosomal protein L36 1</fullName>
    </alternativeName>
</protein>
<comment type="similarity">
    <text evidence="1">Belongs to the bacterial ribosomal protein bL36 family.</text>
</comment>
<feature type="chain" id="PRO_0000344636" description="Large ribosomal subunit protein bL36A">
    <location>
        <begin position="1"/>
        <end position="37"/>
    </location>
</feature>
<proteinExistence type="inferred from homology"/>
<keyword id="KW-1185">Reference proteome</keyword>
<keyword id="KW-0687">Ribonucleoprotein</keyword>
<keyword id="KW-0689">Ribosomal protein</keyword>
<evidence type="ECO:0000255" key="1">
    <source>
        <dbReference type="HAMAP-Rule" id="MF_00251"/>
    </source>
</evidence>
<evidence type="ECO:0000305" key="2"/>
<sequence>MKVRASVKKLCRNCKVVKRQGVVRVICSDPKHKQRQG</sequence>
<organism>
    <name type="scientific">Actinobacillus pleuropneumoniae serotype 5b (strain L20)</name>
    <dbReference type="NCBI Taxonomy" id="416269"/>
    <lineage>
        <taxon>Bacteria</taxon>
        <taxon>Pseudomonadati</taxon>
        <taxon>Pseudomonadota</taxon>
        <taxon>Gammaproteobacteria</taxon>
        <taxon>Pasteurellales</taxon>
        <taxon>Pasteurellaceae</taxon>
        <taxon>Actinobacillus</taxon>
    </lineage>
</organism>